<comment type="function">
    <text evidence="1">Nucleoside triphosphate pyrophosphatase. May have a dual role in cell division arrest and in preventing the incorporation of modified nucleotides into cellular nucleic acids.</text>
</comment>
<comment type="catalytic activity">
    <reaction evidence="1">
        <text>a ribonucleoside 5'-triphosphate + H2O = a ribonucleoside 5'-phosphate + diphosphate + H(+)</text>
        <dbReference type="Rhea" id="RHEA:23996"/>
        <dbReference type="ChEBI" id="CHEBI:15377"/>
        <dbReference type="ChEBI" id="CHEBI:15378"/>
        <dbReference type="ChEBI" id="CHEBI:33019"/>
        <dbReference type="ChEBI" id="CHEBI:58043"/>
        <dbReference type="ChEBI" id="CHEBI:61557"/>
        <dbReference type="EC" id="3.6.1.9"/>
    </reaction>
</comment>
<comment type="catalytic activity">
    <reaction evidence="1">
        <text>a 2'-deoxyribonucleoside 5'-triphosphate + H2O = a 2'-deoxyribonucleoside 5'-phosphate + diphosphate + H(+)</text>
        <dbReference type="Rhea" id="RHEA:44644"/>
        <dbReference type="ChEBI" id="CHEBI:15377"/>
        <dbReference type="ChEBI" id="CHEBI:15378"/>
        <dbReference type="ChEBI" id="CHEBI:33019"/>
        <dbReference type="ChEBI" id="CHEBI:61560"/>
        <dbReference type="ChEBI" id="CHEBI:65317"/>
        <dbReference type="EC" id="3.6.1.9"/>
    </reaction>
</comment>
<comment type="cofactor">
    <cofactor evidence="1">
        <name>a divalent metal cation</name>
        <dbReference type="ChEBI" id="CHEBI:60240"/>
    </cofactor>
</comment>
<comment type="subcellular location">
    <subcellularLocation>
        <location evidence="1">Cytoplasm</location>
    </subcellularLocation>
</comment>
<comment type="similarity">
    <text evidence="1">Belongs to the Maf family.</text>
</comment>
<accession>C0ZWV2</accession>
<proteinExistence type="inferred from homology"/>
<name>NTPP_RHOE4</name>
<evidence type="ECO:0000255" key="1">
    <source>
        <dbReference type="HAMAP-Rule" id="MF_00528"/>
    </source>
</evidence>
<keyword id="KW-0963">Cytoplasm</keyword>
<keyword id="KW-0378">Hydrolase</keyword>
<keyword id="KW-0546">Nucleotide metabolism</keyword>
<dbReference type="EC" id="3.6.1.9" evidence="1"/>
<dbReference type="EMBL" id="AP008957">
    <property type="protein sequence ID" value="BAH32837.1"/>
    <property type="molecule type" value="Genomic_DNA"/>
</dbReference>
<dbReference type="RefSeq" id="WP_007731146.1">
    <property type="nucleotide sequence ID" value="NC_012490.1"/>
</dbReference>
<dbReference type="SMR" id="C0ZWV2"/>
<dbReference type="KEGG" id="rer:RER_21290"/>
<dbReference type="eggNOG" id="COG0424">
    <property type="taxonomic scope" value="Bacteria"/>
</dbReference>
<dbReference type="HOGENOM" id="CLU_040416_1_2_11"/>
<dbReference type="Proteomes" id="UP000002204">
    <property type="component" value="Chromosome"/>
</dbReference>
<dbReference type="GO" id="GO:0005737">
    <property type="term" value="C:cytoplasm"/>
    <property type="evidence" value="ECO:0007669"/>
    <property type="project" value="UniProtKB-SubCell"/>
</dbReference>
<dbReference type="GO" id="GO:0047429">
    <property type="term" value="F:nucleoside triphosphate diphosphatase activity"/>
    <property type="evidence" value="ECO:0007669"/>
    <property type="project" value="UniProtKB-EC"/>
</dbReference>
<dbReference type="GO" id="GO:0009117">
    <property type="term" value="P:nucleotide metabolic process"/>
    <property type="evidence" value="ECO:0007669"/>
    <property type="project" value="UniProtKB-KW"/>
</dbReference>
<dbReference type="CDD" id="cd00555">
    <property type="entry name" value="Maf"/>
    <property type="match status" value="1"/>
</dbReference>
<dbReference type="Gene3D" id="3.90.950.10">
    <property type="match status" value="1"/>
</dbReference>
<dbReference type="HAMAP" id="MF_00528">
    <property type="entry name" value="Maf"/>
    <property type="match status" value="1"/>
</dbReference>
<dbReference type="InterPro" id="IPR029001">
    <property type="entry name" value="ITPase-like_fam"/>
</dbReference>
<dbReference type="InterPro" id="IPR003697">
    <property type="entry name" value="Maf-like"/>
</dbReference>
<dbReference type="NCBIfam" id="TIGR00172">
    <property type="entry name" value="maf"/>
    <property type="match status" value="1"/>
</dbReference>
<dbReference type="PANTHER" id="PTHR43213">
    <property type="entry name" value="BIFUNCTIONAL DTTP/UTP PYROPHOSPHATASE/METHYLTRANSFERASE PROTEIN-RELATED"/>
    <property type="match status" value="1"/>
</dbReference>
<dbReference type="PANTHER" id="PTHR43213:SF5">
    <property type="entry name" value="BIFUNCTIONAL DTTP_UTP PYROPHOSPHATASE_METHYLTRANSFERASE PROTEIN-RELATED"/>
    <property type="match status" value="1"/>
</dbReference>
<dbReference type="Pfam" id="PF02545">
    <property type="entry name" value="Maf"/>
    <property type="match status" value="1"/>
</dbReference>
<dbReference type="PIRSF" id="PIRSF006305">
    <property type="entry name" value="Maf"/>
    <property type="match status" value="1"/>
</dbReference>
<dbReference type="SUPFAM" id="SSF52972">
    <property type="entry name" value="ITPase-like"/>
    <property type="match status" value="1"/>
</dbReference>
<protein>
    <recommendedName>
        <fullName evidence="1">Nucleoside triphosphate pyrophosphatase</fullName>
        <ecNumber evidence="1">3.6.1.9</ecNumber>
    </recommendedName>
    <alternativeName>
        <fullName evidence="1">Nucleotide pyrophosphatase</fullName>
        <shortName evidence="1">Nucleotide PPase</shortName>
    </alternativeName>
</protein>
<sequence>MTQLVLASASPARLAVLRAAGVSPLVRVSGVDEDKIADNLGPDAAPEKVVTVLAEAKAAEIVPGLAADNLTDVVVVGCDSMLLIDGQLQGKPGSVDIARKRWAAMAGRSATLLTGHCVLRVADGRIVRMASDHSATVVHFAQPSTEDLEAYLATGEPLQVAGAFTLDSLGGWFVERIEGDPSSVIGIGLPLVRTLLERVGVSVSDLWRTQSIF</sequence>
<gene>
    <name type="ordered locus">RER_21290</name>
</gene>
<feature type="chain" id="PRO_1000211772" description="Nucleoside triphosphate pyrophosphatase">
    <location>
        <begin position="1"/>
        <end position="213"/>
    </location>
</feature>
<feature type="active site" description="Proton acceptor" evidence="1">
    <location>
        <position position="79"/>
    </location>
</feature>
<organism>
    <name type="scientific">Rhodococcus erythropolis (strain PR4 / NBRC 100887)</name>
    <dbReference type="NCBI Taxonomy" id="234621"/>
    <lineage>
        <taxon>Bacteria</taxon>
        <taxon>Bacillati</taxon>
        <taxon>Actinomycetota</taxon>
        <taxon>Actinomycetes</taxon>
        <taxon>Mycobacteriales</taxon>
        <taxon>Nocardiaceae</taxon>
        <taxon>Rhodococcus</taxon>
        <taxon>Rhodococcus erythropolis group</taxon>
    </lineage>
</organism>
<reference key="1">
    <citation type="submission" date="2005-03" db="EMBL/GenBank/DDBJ databases">
        <title>Comparison of the complete genome sequences of Rhodococcus erythropolis PR4 and Rhodococcus opacus B4.</title>
        <authorList>
            <person name="Takarada H."/>
            <person name="Sekine M."/>
            <person name="Hosoyama A."/>
            <person name="Yamada R."/>
            <person name="Fujisawa T."/>
            <person name="Omata S."/>
            <person name="Shimizu A."/>
            <person name="Tsukatani N."/>
            <person name="Tanikawa S."/>
            <person name="Fujita N."/>
            <person name="Harayama S."/>
        </authorList>
    </citation>
    <scope>NUCLEOTIDE SEQUENCE [LARGE SCALE GENOMIC DNA]</scope>
    <source>
        <strain>PR4 / NBRC 100887</strain>
    </source>
</reference>